<gene>
    <name type="primary">nop9</name>
    <name type="ORF">NCU06118</name>
</gene>
<dbReference type="EMBL" id="CM002242">
    <property type="protein sequence ID" value="EAA30744.1"/>
    <property type="molecule type" value="Genomic_DNA"/>
</dbReference>
<dbReference type="RefSeq" id="XP_959980.1">
    <property type="nucleotide sequence ID" value="XM_954887.2"/>
</dbReference>
<dbReference type="SMR" id="Q7S5H0"/>
<dbReference type="FunCoup" id="Q7S5H0">
    <property type="interactions" value="875"/>
</dbReference>
<dbReference type="STRING" id="367110.Q7S5H0"/>
<dbReference type="PaxDb" id="5141-EFNCRP00000005319"/>
<dbReference type="EnsemblFungi" id="EAA30744">
    <property type="protein sequence ID" value="EAA30744"/>
    <property type="gene ID" value="NCU06118"/>
</dbReference>
<dbReference type="GeneID" id="3876134"/>
<dbReference type="KEGG" id="ncr:NCU06118"/>
<dbReference type="VEuPathDB" id="FungiDB:NCU06118"/>
<dbReference type="HOGENOM" id="CLU_008720_1_0_1"/>
<dbReference type="InParanoid" id="Q7S5H0"/>
<dbReference type="OMA" id="HHLVRNF"/>
<dbReference type="OrthoDB" id="392571at2759"/>
<dbReference type="Proteomes" id="UP000001805">
    <property type="component" value="Chromosome 7, Linkage Group VII"/>
</dbReference>
<dbReference type="GO" id="GO:0030686">
    <property type="term" value="C:90S preribosome"/>
    <property type="evidence" value="ECO:0000318"/>
    <property type="project" value="GO_Central"/>
</dbReference>
<dbReference type="GO" id="GO:0005730">
    <property type="term" value="C:nucleolus"/>
    <property type="evidence" value="ECO:0000318"/>
    <property type="project" value="GO_Central"/>
</dbReference>
<dbReference type="GO" id="GO:0030688">
    <property type="term" value="C:preribosome, small subunit precursor"/>
    <property type="evidence" value="ECO:0000318"/>
    <property type="project" value="GO_Central"/>
</dbReference>
<dbReference type="GO" id="GO:0003723">
    <property type="term" value="F:RNA binding"/>
    <property type="evidence" value="ECO:0000318"/>
    <property type="project" value="GO_Central"/>
</dbReference>
<dbReference type="GO" id="GO:0000480">
    <property type="term" value="P:endonucleolytic cleavage in 5'-ETS of tricistronic rRNA transcript (SSU-rRNA, 5.8S rRNA, LSU-rRNA)"/>
    <property type="evidence" value="ECO:0000318"/>
    <property type="project" value="GO_Central"/>
</dbReference>
<dbReference type="GO" id="GO:0000447">
    <property type="term" value="P:endonucleolytic cleavage in ITS1 to separate SSU-rRNA from 5.8S rRNA and LSU-rRNA from tricistronic rRNA transcript (SSU-rRNA, 5.8S rRNA, LSU-rRNA)"/>
    <property type="evidence" value="ECO:0000318"/>
    <property type="project" value="GO_Central"/>
</dbReference>
<dbReference type="GO" id="GO:0000472">
    <property type="term" value="P:endonucleolytic cleavage to generate mature 5'-end of SSU-rRNA from (SSU-rRNA, 5.8S rRNA, LSU-rRNA)"/>
    <property type="evidence" value="ECO:0000318"/>
    <property type="project" value="GO_Central"/>
</dbReference>
<dbReference type="GO" id="GO:0000056">
    <property type="term" value="P:ribosomal small subunit export from nucleus"/>
    <property type="evidence" value="ECO:0000318"/>
    <property type="project" value="GO_Central"/>
</dbReference>
<dbReference type="Gene3D" id="1.25.10.10">
    <property type="entry name" value="Leucine-rich Repeat Variant"/>
    <property type="match status" value="2"/>
</dbReference>
<dbReference type="InterPro" id="IPR011989">
    <property type="entry name" value="ARM-like"/>
</dbReference>
<dbReference type="InterPro" id="IPR016024">
    <property type="entry name" value="ARM-type_fold"/>
</dbReference>
<dbReference type="InterPro" id="IPR040000">
    <property type="entry name" value="NOP9"/>
</dbReference>
<dbReference type="InterPro" id="IPR001313">
    <property type="entry name" value="Pumilio_RNA-bd_rpt"/>
</dbReference>
<dbReference type="PANTHER" id="PTHR13102">
    <property type="entry name" value="NUCLEOLAR PROTEIN 9"/>
    <property type="match status" value="1"/>
</dbReference>
<dbReference type="PANTHER" id="PTHR13102:SF0">
    <property type="entry name" value="NUCLEOLAR PROTEIN 9"/>
    <property type="match status" value="1"/>
</dbReference>
<dbReference type="Pfam" id="PF22493">
    <property type="entry name" value="PUF_NOP9"/>
    <property type="match status" value="1"/>
</dbReference>
<dbReference type="SMART" id="SM00025">
    <property type="entry name" value="Pumilio"/>
    <property type="match status" value="6"/>
</dbReference>
<dbReference type="SUPFAM" id="SSF48371">
    <property type="entry name" value="ARM repeat"/>
    <property type="match status" value="1"/>
</dbReference>
<protein>
    <recommendedName>
        <fullName>Nucleolar protein 9</fullName>
    </recommendedName>
    <alternativeName>
        <fullName>Pumilio domain-containing protein nop9</fullName>
    </alternativeName>
</protein>
<feature type="chain" id="PRO_0000407820" description="Nucleolar protein 9">
    <location>
        <begin position="1"/>
        <end position="775"/>
    </location>
</feature>
<feature type="repeat" description="Pumilio 1">
    <location>
        <begin position="125"/>
        <end position="160"/>
    </location>
</feature>
<feature type="repeat" description="Pumilio 2">
    <location>
        <begin position="161"/>
        <end position="196"/>
    </location>
</feature>
<feature type="repeat" description="Pumilio 3">
    <location>
        <begin position="227"/>
        <end position="267"/>
    </location>
</feature>
<feature type="repeat" description="Pumilio 4">
    <location>
        <begin position="390"/>
        <end position="425"/>
    </location>
</feature>
<feature type="repeat" description="Pumilio 5">
    <location>
        <begin position="633"/>
        <end position="679"/>
    </location>
</feature>
<feature type="region of interest" description="Disordered" evidence="2">
    <location>
        <begin position="1"/>
        <end position="79"/>
    </location>
</feature>
<feature type="region of interest" description="Disordered" evidence="2">
    <location>
        <begin position="345"/>
        <end position="367"/>
    </location>
</feature>
<feature type="region of interest" description="Disordered" evidence="2">
    <location>
        <begin position="525"/>
        <end position="557"/>
    </location>
</feature>
<feature type="region of interest" description="Disordered" evidence="2">
    <location>
        <begin position="720"/>
        <end position="775"/>
    </location>
</feature>
<feature type="compositionally biased region" description="Basic residues" evidence="2">
    <location>
        <begin position="1"/>
        <end position="10"/>
    </location>
</feature>
<feature type="compositionally biased region" description="Basic and acidic residues" evidence="2">
    <location>
        <begin position="11"/>
        <end position="41"/>
    </location>
</feature>
<feature type="compositionally biased region" description="Basic and acidic residues" evidence="2">
    <location>
        <begin position="345"/>
        <end position="366"/>
    </location>
</feature>
<feature type="compositionally biased region" description="Basic and acidic residues" evidence="2">
    <location>
        <begin position="732"/>
        <end position="746"/>
    </location>
</feature>
<feature type="compositionally biased region" description="Basic and acidic residues" evidence="2">
    <location>
        <begin position="766"/>
        <end position="775"/>
    </location>
</feature>
<proteinExistence type="inferred from homology"/>
<accession>Q7S5H0</accession>
<evidence type="ECO:0000250" key="1"/>
<evidence type="ECO:0000256" key="2">
    <source>
        <dbReference type="SAM" id="MobiDB-lite"/>
    </source>
</evidence>
<evidence type="ECO:0000305" key="3"/>
<sequence length="775" mass="87513">MGKNRKSKRQLVRDEKRAKKREREIEHEEERDIKKQRREEAQQEALAPAAADYVPPPLDGTYDENAFSSAPEGRRGPNTNFEREFFGMLAEEEQEYFRHADELLELNDFPSAEERDIFLQNVYKEMRGKELKLASSQSCSRLMERLILLSNTRQKKSLFDAFGGHFISLVTHRFASHCCEKLFLQSAPVVTQELSGEYEQEPLPEGEEETEAMKSSMEDLFLLTLDELEEHLGFLLSDRYGSHAMRALLVILSGRPLDQAGTKSLLQSRKKEYITVEGAAANASELSSQIRAVPSSFTMAIKKIIDDSTATMDATALRVLAKHPTGNPTLQLLLELELTMFGKNKEKKDKKQKKDDDEAETKKEETQSEISLLGMLVPDAPAAFADNTTQAAEFVNSMIYDPIGSRLLETLITHCPGKIFKGLQQHIFGPRIQSLLRNDIACYPAIRVLNRLSREDLADAVEKSLPEMASFVDKGRFNVIKTLFERCNVRNGTDEINSLLKALTSAYGNDWKNIVPKLCMLDEEVSEEEQKPESTEEVGEEEAEEKKKQQQPKFQTQEAKNKAFMLNHGSQLVAALLTIPGQPSKAIQSSLAALKPAQVMKMATTSHNTSSILIKALQTPAITPTFHKVLVSSLLPHVYELATSQHGSAILNAIITLPSKPAEPNAPAVPFHMKENIISQLAQYERDLRETWLGRNVWRTWKGDLWSHRRHDWVRWAKETDPETARVAAAPKKREEKEKEEAEKKPKGYLGKNFDPKKAKGLAGNKKFEKKEVSA</sequence>
<comment type="function">
    <text evidence="1">RNA-binding nucleolar protein required for pre-rRNA processing. Involved in production of 18S rRNA and assembly of small ribosomal subunit (By similarity).</text>
</comment>
<comment type="subcellular location">
    <subcellularLocation>
        <location evidence="1">Nucleus</location>
        <location evidence="1">Nucleolus</location>
    </subcellularLocation>
</comment>
<comment type="similarity">
    <text evidence="3">Belongs to the NOP9 family.</text>
</comment>
<name>NOP9_NEUCR</name>
<organism>
    <name type="scientific">Neurospora crassa (strain ATCC 24698 / 74-OR23-1A / CBS 708.71 / DSM 1257 / FGSC 987)</name>
    <dbReference type="NCBI Taxonomy" id="367110"/>
    <lineage>
        <taxon>Eukaryota</taxon>
        <taxon>Fungi</taxon>
        <taxon>Dikarya</taxon>
        <taxon>Ascomycota</taxon>
        <taxon>Pezizomycotina</taxon>
        <taxon>Sordariomycetes</taxon>
        <taxon>Sordariomycetidae</taxon>
        <taxon>Sordariales</taxon>
        <taxon>Sordariaceae</taxon>
        <taxon>Neurospora</taxon>
    </lineage>
</organism>
<reference key="1">
    <citation type="journal article" date="2003" name="Nature">
        <title>The genome sequence of the filamentous fungus Neurospora crassa.</title>
        <authorList>
            <person name="Galagan J.E."/>
            <person name="Calvo S.E."/>
            <person name="Borkovich K.A."/>
            <person name="Selker E.U."/>
            <person name="Read N.D."/>
            <person name="Jaffe D.B."/>
            <person name="FitzHugh W."/>
            <person name="Ma L.-J."/>
            <person name="Smirnov S."/>
            <person name="Purcell S."/>
            <person name="Rehman B."/>
            <person name="Elkins T."/>
            <person name="Engels R."/>
            <person name="Wang S."/>
            <person name="Nielsen C.B."/>
            <person name="Butler J."/>
            <person name="Endrizzi M."/>
            <person name="Qui D."/>
            <person name="Ianakiev P."/>
            <person name="Bell-Pedersen D."/>
            <person name="Nelson M.A."/>
            <person name="Werner-Washburne M."/>
            <person name="Selitrennikoff C.P."/>
            <person name="Kinsey J.A."/>
            <person name="Braun E.L."/>
            <person name="Zelter A."/>
            <person name="Schulte U."/>
            <person name="Kothe G.O."/>
            <person name="Jedd G."/>
            <person name="Mewes H.-W."/>
            <person name="Staben C."/>
            <person name="Marcotte E."/>
            <person name="Greenberg D."/>
            <person name="Roy A."/>
            <person name="Foley K."/>
            <person name="Naylor J."/>
            <person name="Stange-Thomann N."/>
            <person name="Barrett R."/>
            <person name="Gnerre S."/>
            <person name="Kamal M."/>
            <person name="Kamvysselis M."/>
            <person name="Mauceli E.W."/>
            <person name="Bielke C."/>
            <person name="Rudd S."/>
            <person name="Frishman D."/>
            <person name="Krystofova S."/>
            <person name="Rasmussen C."/>
            <person name="Metzenberg R.L."/>
            <person name="Perkins D.D."/>
            <person name="Kroken S."/>
            <person name="Cogoni C."/>
            <person name="Macino G."/>
            <person name="Catcheside D.E.A."/>
            <person name="Li W."/>
            <person name="Pratt R.J."/>
            <person name="Osmani S.A."/>
            <person name="DeSouza C.P.C."/>
            <person name="Glass N.L."/>
            <person name="Orbach M.J."/>
            <person name="Berglund J.A."/>
            <person name="Voelker R."/>
            <person name="Yarden O."/>
            <person name="Plamann M."/>
            <person name="Seiler S."/>
            <person name="Dunlap J.C."/>
            <person name="Radford A."/>
            <person name="Aramayo R."/>
            <person name="Natvig D.O."/>
            <person name="Alex L.A."/>
            <person name="Mannhaupt G."/>
            <person name="Ebbole D.J."/>
            <person name="Freitag M."/>
            <person name="Paulsen I."/>
            <person name="Sachs M.S."/>
            <person name="Lander E.S."/>
            <person name="Nusbaum C."/>
            <person name="Birren B.W."/>
        </authorList>
    </citation>
    <scope>NUCLEOTIDE SEQUENCE [LARGE SCALE GENOMIC DNA]</scope>
    <source>
        <strain>ATCC 24698 / 74-OR23-1A / CBS 708.71 / DSM 1257 / FGSC 987</strain>
    </source>
</reference>
<keyword id="KW-0539">Nucleus</keyword>
<keyword id="KW-1185">Reference proteome</keyword>
<keyword id="KW-0677">Repeat</keyword>
<keyword id="KW-0690">Ribosome biogenesis</keyword>
<keyword id="KW-0698">rRNA processing</keyword>